<protein>
    <recommendedName>
        <fullName>Probable non-specific lipid-transfer protein 2</fullName>
        <shortName>LTP 2</shortName>
    </recommendedName>
    <alternativeName>
        <fullName>Allergen Par j II</fullName>
    </alternativeName>
    <alternativeName>
        <fullName>Major pollen allergen Par j 2.0101</fullName>
    </alternativeName>
    <alternativeName>
        <fullName>Protein P2</fullName>
    </alternativeName>
    <allergenName>Par j 2.0101</allergenName>
</protein>
<feature type="signal peptide" evidence="1">
    <location>
        <begin position="1"/>
        <end position="31"/>
    </location>
</feature>
<feature type="chain" id="PRO_0000018398" description="Probable non-specific lipid-transfer protein 2">
    <location>
        <begin position="32"/>
        <end position="133"/>
    </location>
</feature>
<feature type="disulfide bond" evidence="2">
    <location>
        <begin position="35"/>
        <end position="83"/>
    </location>
</feature>
<feature type="disulfide bond" evidence="2">
    <location>
        <begin position="45"/>
        <end position="60"/>
    </location>
</feature>
<feature type="disulfide bond" evidence="2">
    <location>
        <begin position="61"/>
        <end position="106"/>
    </location>
</feature>
<feature type="disulfide bond" evidence="2">
    <location>
        <begin position="81"/>
        <end position="121"/>
    </location>
</feature>
<evidence type="ECO:0000255" key="1"/>
<evidence type="ECO:0000269" key="2">
    <source>
    </source>
</evidence>
<evidence type="ECO:0000305" key="3"/>
<keyword id="KW-0020">Allergen</keyword>
<keyword id="KW-1015">Disulfide bond</keyword>
<keyword id="KW-0446">Lipid-binding</keyword>
<keyword id="KW-0732">Signal</keyword>
<keyword id="KW-0813">Transport</keyword>
<name>NLT21_PARJU</name>
<dbReference type="EMBL" id="X95865">
    <property type="protein sequence ID" value="CAA65121.1"/>
    <property type="molecule type" value="mRNA"/>
</dbReference>
<dbReference type="SMR" id="P55958"/>
<dbReference type="Allergome" id="507">
    <property type="allergen name" value="Par j 2"/>
</dbReference>
<dbReference type="Allergome" id="508">
    <property type="allergen name" value="Par j 2.0101"/>
</dbReference>
<dbReference type="GO" id="GO:0008289">
    <property type="term" value="F:lipid binding"/>
    <property type="evidence" value="ECO:0007669"/>
    <property type="project" value="UniProtKB-KW"/>
</dbReference>
<dbReference type="GO" id="GO:0006869">
    <property type="term" value="P:lipid transport"/>
    <property type="evidence" value="ECO:0007669"/>
    <property type="project" value="InterPro"/>
</dbReference>
<dbReference type="CDD" id="cd01960">
    <property type="entry name" value="nsLTP1"/>
    <property type="match status" value="1"/>
</dbReference>
<dbReference type="Gene3D" id="1.10.110.10">
    <property type="entry name" value="Plant lipid-transfer and hydrophobic proteins"/>
    <property type="match status" value="1"/>
</dbReference>
<dbReference type="InterPro" id="IPR036312">
    <property type="entry name" value="Bifun_inhib/LTP/seed_sf"/>
</dbReference>
<dbReference type="InterPro" id="IPR016140">
    <property type="entry name" value="Bifunc_inhib/LTP/seed_store"/>
</dbReference>
<dbReference type="InterPro" id="IPR000528">
    <property type="entry name" value="Plant_nsLTP"/>
</dbReference>
<dbReference type="PANTHER" id="PTHR33076">
    <property type="entry name" value="NON-SPECIFIC LIPID-TRANSFER PROTEIN 2-RELATED"/>
    <property type="match status" value="1"/>
</dbReference>
<dbReference type="Pfam" id="PF00234">
    <property type="entry name" value="Tryp_alpha_amyl"/>
    <property type="match status" value="1"/>
</dbReference>
<dbReference type="PRINTS" id="PR00382">
    <property type="entry name" value="LIPIDTRNSFER"/>
</dbReference>
<dbReference type="SMART" id="SM00499">
    <property type="entry name" value="AAI"/>
    <property type="match status" value="1"/>
</dbReference>
<dbReference type="SUPFAM" id="SSF47699">
    <property type="entry name" value="Bifunctional inhibitor/lipid-transfer protein/seed storage 2S albumin"/>
    <property type="match status" value="1"/>
</dbReference>
<dbReference type="PROSITE" id="PS00597">
    <property type="entry name" value="PLANT_LTP"/>
    <property type="match status" value="1"/>
</dbReference>
<reference key="1">
    <citation type="journal article" date="1996" name="FEBS Lett.">
        <title>cDNA cloning, sequence analysis and allergological characterization of Par j 2.0101, a new major allergen of the Parietaria judaica pollen.</title>
        <authorList>
            <person name="Duro G."/>
            <person name="Colombo P."/>
            <person name="Costa M.A."/>
            <person name="Izzo V."/>
            <person name="Porcasi R."/>
            <person name="di Fiore R."/>
            <person name="Locorotondo G."/>
            <person name="Mirisola M.G."/>
            <person name="Cocchiara R."/>
            <person name="Geraci D."/>
        </authorList>
    </citation>
    <scope>NUCLEOTIDE SEQUENCE [MRNA]</scope>
    <source>
        <tissue>Pollen</tissue>
    </source>
</reference>
<reference key="2">
    <citation type="journal article" date="2003" name="Biol. Chem.">
        <title>Assignment of disulphide bridges in Par j 2.0101, a major allergen of Parietaria judaica pollen.</title>
        <authorList>
            <person name="Amoresano A."/>
            <person name="Pucci P."/>
            <person name="Duro G."/>
            <person name="Colombo P."/>
            <person name="Costa M.A."/>
            <person name="Izzo V."/>
            <person name="Lamba D."/>
            <person name="Geraci D."/>
        </authorList>
    </citation>
    <scope>DISULFIDE BONDS</scope>
</reference>
<accession>P55958</accession>
<proteinExistence type="evidence at protein level"/>
<organism>
    <name type="scientific">Parietaria judaica</name>
    <name type="common">Pellitory-of-the-wall</name>
    <name type="synonym">Parietaria diffusa</name>
    <dbReference type="NCBI Taxonomy" id="33127"/>
    <lineage>
        <taxon>Eukaryota</taxon>
        <taxon>Viridiplantae</taxon>
        <taxon>Streptophyta</taxon>
        <taxon>Embryophyta</taxon>
        <taxon>Tracheophyta</taxon>
        <taxon>Spermatophyta</taxon>
        <taxon>Magnoliopsida</taxon>
        <taxon>eudicotyledons</taxon>
        <taxon>Gunneridae</taxon>
        <taxon>Pentapetalae</taxon>
        <taxon>rosids</taxon>
        <taxon>fabids</taxon>
        <taxon>Rosales</taxon>
        <taxon>Urticaceae</taxon>
        <taxon>Parietaria</taxon>
    </lineage>
</organism>
<sequence>MRTVSMAALVVIAAALAWTSSAEPAPAPAPGEEACGKVVQDIMPCLHFVKGEEKEPSKECCSGTKKLSEEVKTTEQKREACKCIVRATKGISGIKNELVAEVPKKCDIKTTLPPITADFDCSKIQSTIFRGYY</sequence>
<comment type="function">
    <text>Plant non-specific lipid-transfer proteins transfer phospholipids as well as galactolipids across membranes. May play a role in wax or cutin deposition in the cell walls of expanding epidermal cells and certain secretory tissues.</text>
</comment>
<comment type="allergen">
    <text>Causes an allergic reaction in human. Binds to IgE and induces histamine release from basophils of Pj-pollen-allergic subjects.</text>
</comment>
<comment type="similarity">
    <text evidence="3">Belongs to the plant LTP family.</text>
</comment>